<keyword id="KW-0002">3D-structure</keyword>
<keyword id="KW-0010">Activator</keyword>
<keyword id="KW-0025">Alternative splicing</keyword>
<keyword id="KW-0903">Direct protein sequencing</keyword>
<keyword id="KW-0225">Disease variant</keyword>
<keyword id="KW-0238">DNA-binding</keyword>
<keyword id="KW-1017">Isopeptide bond</keyword>
<keyword id="KW-0539">Nucleus</keyword>
<keyword id="KW-0597">Phosphoprotein</keyword>
<keyword id="KW-1267">Proteomics identification</keyword>
<keyword id="KW-1185">Reference proteome</keyword>
<keyword id="KW-0804">Transcription</keyword>
<keyword id="KW-0805">Transcription regulation</keyword>
<keyword id="KW-0832">Ubl conjugation</keyword>
<sequence length="437" mass="48062">MLWKLTDNIKYEDCEDRHDGTSNGTARLPQLGTVGQSPYTSAPPLSHTPNADFQPPYFPPPYQPIYPQSQDPYSHVNDPYSLNPLHAQPQPQHPGWPGQRQSQESGLLHTHRGLPHQLSGLDPRRDYRRHEDLLHGPHALSSGLGDLSIHSLPHAIEEVPHVEDPGINIPDQTVIKKGPVSLSKSNSNAVSAIPINKDNLFGGVVNPNEVFCSVPGRLSLLSSTSKYKVTVAEVQRRLSPPECLNASLLGGVLRRAKSKNGGRSLREKLDKIGLNLPAGRRKAANVTLLTSLVEGEAVHLARDFGYVCETEFPAKAVAEFLNRQHSDPNEQVTRKNMLLATKQICKEFTDLLAQDRSPLGNSRPNPILEPGIQSCLTHFNLISHGFGSPAVCAAVTALQNYLTEALKAMDKMYLSNNPNSHTDNNAKSSDKEEKHRK</sequence>
<organism>
    <name type="scientific">Homo sapiens</name>
    <name type="common">Human</name>
    <dbReference type="NCBI Taxonomy" id="9606"/>
    <lineage>
        <taxon>Eukaryota</taxon>
        <taxon>Metazoa</taxon>
        <taxon>Chordata</taxon>
        <taxon>Craniata</taxon>
        <taxon>Vertebrata</taxon>
        <taxon>Euteleostomi</taxon>
        <taxon>Mammalia</taxon>
        <taxon>Eutheria</taxon>
        <taxon>Euarchontoglires</taxon>
        <taxon>Primates</taxon>
        <taxon>Haplorrhini</taxon>
        <taxon>Catarrhini</taxon>
        <taxon>Hominidae</taxon>
        <taxon>Homo</taxon>
    </lineage>
</organism>
<comment type="function">
    <text evidence="4 7">Sequence-specific DNA-binding protein that interacts with inducible viral and cellular enhancer elements to regulate transcription of selected genes. AP-2 factors bind to the consensus sequence 5'-GCCNNNGGC-3' and activate genes involved in a large spectrum of important biological functions including proper eye, face, body wall, limb and neural tube development. They also suppress a number of genes including MCAM/MUC18, C/EBP alpha and MYC. AP-2-alpha is the only AP-2 protein required for early morphogenesis of the lens vesicle. Together with the CITED2 coactivator, stimulates the PITX2 P1 promoter transcription activation. Associates with chromatin to the PITX2 P1 promoter region.</text>
</comment>
<comment type="subunit">
    <text evidence="4 5 6 7 8 9 11 12 13">Binds DNA as a dimer. Can form homodimers or heterodimers with other AP-2 family members. Interacts with WWOX. Interacts with CITED4. Interacts with UBE2I. Interacts with RALBP1 in a complex also containing EPN1 and NUMB during interphase and mitosis. Interacts with KCTD1; this interaction represses transcription activation. Interacts (via C-terminus) with CITED2 (via C-terminus); the interaction stimulates TFAP2A-transcriptional activation. Interacts (via N-terminus) with EP300 (via N-terminus); the interaction requires CITED2. Interacts with KCTD15; this interaction inhibits TFAP2A transcriptional activation.</text>
</comment>
<comment type="interaction">
    <interactant intactId="EBI-347351">
        <id>P05549</id>
    </interactant>
    <interactant intactId="EBI-11109648">
        <id>Q86TX2</id>
        <label>ACOT1</label>
    </interactant>
    <organismsDiffer>false</organismsDiffer>
    <experiments>2</experiments>
</comment>
<comment type="interaction">
    <interactant intactId="EBI-347351">
        <id>P05549</id>
    </interactant>
    <interactant intactId="EBI-447295">
        <id>Q09472</id>
        <label>EP300</label>
    </interactant>
    <organismsDiffer>false</organismsDiffer>
    <experiments>7</experiments>
</comment>
<comment type="interaction">
    <interactant intactId="EBI-347351">
        <id>P05549</id>
    </interactant>
    <interactant intactId="EBI-10194609">
        <id>Q9H4Y5</id>
        <label>GSTO2</label>
    </interactant>
    <organismsDiffer>false</organismsDiffer>
    <experiments>4</experiments>
</comment>
<comment type="interaction">
    <interactant intactId="EBI-347351">
        <id>P05549</id>
    </interactant>
    <interactant intactId="EBI-751711">
        <id>P61244</id>
        <label>MAX</label>
    </interactant>
    <organismsDiffer>false</organismsDiffer>
    <experiments>2</experiments>
</comment>
<comment type="interaction">
    <interactant intactId="EBI-347351">
        <id>P05549</id>
    </interactant>
    <interactant intactId="EBI-2340269">
        <id>Q13064</id>
        <label>MKRN3</label>
    </interactant>
    <organismsDiffer>false</organismsDiffer>
    <experiments>3</experiments>
</comment>
<comment type="interaction">
    <interactant intactId="EBI-347351">
        <id>P05549</id>
    </interactant>
    <interactant intactId="EBI-78579">
        <id>P06748</id>
        <label>NPM1</label>
    </interactant>
    <organismsDiffer>false</organismsDiffer>
    <experiments>6</experiments>
</comment>
<comment type="interaction">
    <interactant intactId="EBI-347351">
        <id>P05549</id>
    </interactant>
    <interactant intactId="EBI-80168">
        <id>P63279</id>
        <label>UBE2I</label>
    </interactant>
    <organismsDiffer>false</organismsDiffer>
    <experiments>4</experiments>
</comment>
<comment type="interaction">
    <interactant intactId="EBI-12194905">
        <id>P05549-5</id>
    </interactant>
    <interactant intactId="EBI-10194609">
        <id>Q9H4Y5</id>
        <label>GSTO2</label>
    </interactant>
    <organismsDiffer>false</organismsDiffer>
    <experiments>6</experiments>
</comment>
<comment type="interaction">
    <interactant intactId="EBI-12194905">
        <id>P05549-5</id>
    </interactant>
    <interactant intactId="EBI-6509505">
        <id>Q0VD86</id>
        <label>INCA1</label>
    </interactant>
    <organismsDiffer>false</organismsDiffer>
    <experiments>3</experiments>
</comment>
<comment type="subcellular location">
    <subcellularLocation>
        <location evidence="7">Nucleus</location>
    </subcellularLocation>
</comment>
<comment type="alternative products">
    <event type="alternative splicing"/>
    <isoform>
        <id>P05549-1</id>
        <name>1</name>
        <name>AP-2A</name>
        <sequence type="displayed"/>
    </isoform>
    <isoform>
        <id>P05549-5</id>
        <name>2</name>
        <sequence type="described" ref="VSP_043268"/>
    </isoform>
    <isoform>
        <id>P05549-2</id>
        <name>4</name>
        <name>AP-2B</name>
        <sequence type="described" ref="VSP_006401"/>
    </isoform>
    <isoform>
        <id>P05549-6</id>
        <name>5</name>
        <sequence type="described" ref="VSP_047050"/>
    </isoform>
    <text>Experimental confirmation may be lacking for some isoforms.</text>
</comment>
<comment type="domain">
    <text evidence="1">The PPxY motif mediates interaction with WWOX.</text>
</comment>
<comment type="PTM">
    <text evidence="17">Sumoylated on Lys-10; which inhibits transcriptional activity.</text>
</comment>
<comment type="disease" evidence="10">
    <disease id="DI-01294">
        <name>Branchiooculofacial syndrome</name>
        <acronym>BOFS</acronym>
        <description>A syndrome characterized by growth retardation, bilateral branchial sinus defects with hemangiomatous, scarred skin, cleft lip with or without cleft palate, pseudocleft of the upper lip, nasolacrimal duct obstruction, low set ears with posterior rotation, a malformed, asymmetrical nose with a broad bridge and flattened tip, conductive or sensorineural deafness, ocular and renal anomalies.</description>
        <dbReference type="MIM" id="113620"/>
    </disease>
    <text>The disease is caused by variants affecting the gene represented in this entry.</text>
</comment>
<comment type="miscellaneous">
    <molecule>Isoform 4</molecule>
    <text evidence="16">May be an aberrantly processed form with no significant distribution in vivo.</text>
</comment>
<comment type="similarity">
    <text evidence="16">Belongs to the AP-2 family.</text>
</comment>
<comment type="online information" name="Wikipedia">
    <link uri="https://en.wikipedia.org/wiki/Activating_protein_2"/>
    <text>Activating protein 2 entry</text>
</comment>
<comment type="online information" name="Atlas of Genetics and Cytogenetics in Oncology and Haematology">
    <link uri="https://atlasgeneticsoncology.org/gene/42526/TFAP2A"/>
</comment>
<gene>
    <name type="primary">TFAP2A</name>
    <name type="synonym">AP2TF</name>
    <name type="synonym">TFAP2</name>
</gene>
<name>AP2A_HUMAN</name>
<feature type="chain" id="PRO_0000184796" description="Transcription factor AP-2-alpha">
    <location>
        <begin position="1"/>
        <end position="437"/>
    </location>
</feature>
<feature type="region of interest" description="Disordered" evidence="2">
    <location>
        <begin position="14"/>
        <end position="107"/>
    </location>
</feature>
<feature type="region of interest" description="H-S-H (helix-span-helix), dimerization" evidence="12">
    <location>
        <begin position="280"/>
        <end position="410"/>
    </location>
</feature>
<feature type="region of interest" description="Disordered" evidence="2">
    <location>
        <begin position="414"/>
        <end position="437"/>
    </location>
</feature>
<feature type="short sequence motif" description="PPxY motif">
    <location>
        <begin position="57"/>
        <end position="62"/>
    </location>
</feature>
<feature type="compositionally biased region" description="Low complexity" evidence="2">
    <location>
        <begin position="65"/>
        <end position="74"/>
    </location>
</feature>
<feature type="compositionally biased region" description="Low complexity" evidence="2">
    <location>
        <begin position="88"/>
        <end position="101"/>
    </location>
</feature>
<feature type="compositionally biased region" description="Polar residues" evidence="2">
    <location>
        <begin position="414"/>
        <end position="427"/>
    </location>
</feature>
<feature type="compositionally biased region" description="Basic and acidic residues" evidence="2">
    <location>
        <begin position="428"/>
        <end position="437"/>
    </location>
</feature>
<feature type="modified residue" description="Phosphoserine; by PKA" evidence="3">
    <location>
        <position position="239"/>
    </location>
</feature>
<feature type="cross-link" description="Glycyl lysine isopeptide (Lys-Gly) (interchain with G-Cter in SUMO); alternate" evidence="6">
    <location>
        <position position="10"/>
    </location>
</feature>
<feature type="cross-link" description="Glycyl lysine isopeptide (Lys-Gly) (interchain with G-Cter in SUMO2); alternate" evidence="18">
    <location>
        <position position="10"/>
    </location>
</feature>
<feature type="cross-link" description="Glycyl lysine isopeptide (Lys-Gly) (interchain with G-Cter in SUMO2)" evidence="18">
    <location>
        <position position="177"/>
    </location>
</feature>
<feature type="cross-link" description="Glycyl lysine isopeptide (Lys-Gly) (interchain with G-Cter in SUMO2)" evidence="18">
    <location>
        <position position="184"/>
    </location>
</feature>
<feature type="splice variant" id="VSP_043268" description="In isoform 2." evidence="14">
    <original>MLWKLTDNIKYEDCE</original>
    <variation>MLVHSFSAM</variation>
    <location>
        <begin position="1"/>
        <end position="15"/>
    </location>
</feature>
<feature type="splice variant" id="VSP_047050" description="In isoform 5." evidence="16">
    <original>MLWKLTDNIKYEDCE</original>
    <variation>MSILAKMGDWQ</variation>
    <location>
        <begin position="1"/>
        <end position="15"/>
    </location>
</feature>
<feature type="splice variant" id="VSP_006401" description="In isoform 4." evidence="15">
    <original>EAVHLARDFGYVCETEFPAKAVAEFLNRQHSDPNEQVTRKNMLLATKQICKEFTDLLAQDRSPLGNSRPNPILEPGIQSCLTHFNLISHGFGSPAVCAAVTALQNYLTEALKAMDKMYLSNNPNSHTDNNAKSSDKEEKHRK</original>
    <variation>KRIHLLTRRNFLLGKWIIFSGQMFGRILCQLGSFIFAENIARCEWNYFMAKRNICMYSYTSILLPSFPLP</variation>
    <location>
        <begin position="296"/>
        <end position="437"/>
    </location>
</feature>
<feature type="sequence variant" id="VAR_045838" description="In BOFS." evidence="10">
    <original>L</original>
    <variation>P</variation>
    <location>
        <position position="249"/>
    </location>
</feature>
<feature type="sequence variant" id="VAR_045839" description="In BOFS; dbSNP:rs151344528." evidence="10">
    <original>R</original>
    <variation>G</variation>
    <location>
        <position position="254"/>
    </location>
</feature>
<feature type="sequence variant" id="VAR_045840" description="In BOFS; dbSNP:rs121909574." evidence="10">
    <original>R</original>
    <variation>G</variation>
    <location>
        <position position="255"/>
    </location>
</feature>
<feature type="sequence variant" id="VAR_045841" description="In BOFS; dbSNP:rs121909575." evidence="10">
    <original>G</original>
    <variation>E</variation>
    <location>
        <position position="262"/>
    </location>
</feature>
<feature type="mutagenesis site" description="No phosphorylation." evidence="3">
    <original>S</original>
    <variation>A</variation>
    <location>
        <position position="239"/>
    </location>
</feature>
<feature type="strand" evidence="20">
    <location>
        <begin position="209"/>
        <end position="215"/>
    </location>
</feature>
<feature type="strand" evidence="20">
    <location>
        <begin position="226"/>
        <end position="230"/>
    </location>
</feature>
<feature type="helix" evidence="20">
    <location>
        <begin position="231"/>
        <end position="238"/>
    </location>
</feature>
<feature type="turn" evidence="20">
    <location>
        <begin position="240"/>
        <end position="242"/>
    </location>
</feature>
<feature type="helix" evidence="20">
    <location>
        <begin position="246"/>
        <end position="252"/>
    </location>
</feature>
<feature type="helix" evidence="20">
    <location>
        <begin position="265"/>
        <end position="272"/>
    </location>
</feature>
<feature type="helix" evidence="20">
    <location>
        <begin position="289"/>
        <end position="291"/>
    </location>
</feature>
<feature type="helix" evidence="20">
    <location>
        <begin position="294"/>
        <end position="310"/>
    </location>
</feature>
<feature type="helix" evidence="20">
    <location>
        <begin position="314"/>
        <end position="323"/>
    </location>
</feature>
<feature type="helix" evidence="20">
    <location>
        <begin position="328"/>
        <end position="330"/>
    </location>
</feature>
<feature type="helix" evidence="20">
    <location>
        <begin position="331"/>
        <end position="353"/>
    </location>
</feature>
<feature type="helix" evidence="20">
    <location>
        <begin position="370"/>
        <end position="383"/>
    </location>
</feature>
<feature type="helix" evidence="20">
    <location>
        <begin position="387"/>
        <end position="410"/>
    </location>
</feature>
<feature type="helix" evidence="19">
    <location>
        <begin position="412"/>
        <end position="415"/>
    </location>
</feature>
<accession>P05549</accession>
<accession>Q13777</accession>
<accession>Q5TAV5</accession>
<accession>Q8N1C6</accession>
<proteinExistence type="evidence at protein level"/>
<reference key="1">
    <citation type="journal article" date="1988" name="Genes Dev.">
        <title>Cloning and expression of AP-2, a cell-type-specific transcription factor that activates inducible enhancer elements.</title>
        <authorList>
            <person name="Williams T."/>
            <person name="Admon A."/>
            <person name="Luescher B."/>
            <person name="Tjian R."/>
        </authorList>
    </citation>
    <scope>NUCLEOTIDE SEQUENCE [MRNA] (ISOFORM 1)</scope>
    <scope>PARTIAL PROTEIN SEQUENCE</scope>
</reference>
<reference key="2">
    <citation type="journal article" date="1993" name="Mol. Cell. Biol.">
        <title>An alternatively spliced mRNA from the AP-2 gene encodes a negative regulator of transcriptional activation by AP-2.</title>
        <authorList>
            <person name="Buettner R."/>
            <person name="Kannan P."/>
            <person name="Imhof A."/>
            <person name="Bauer R."/>
            <person name="Yim S.O."/>
            <person name="Glockshuber R."/>
            <person name="Van Dyke M.W."/>
            <person name="Tainsky M.A."/>
        </authorList>
    </citation>
    <scope>NUCLEOTIDE SEQUENCE [MRNA] (ISOFORMS 1 AND 4)</scope>
    <source>
        <tissue>Teratocarcinoma</tissue>
    </source>
</reference>
<reference key="3">
    <citation type="journal article" date="1994" name="Nucleic Acids Res.">
        <title>The genomic structure of the human AP-2 transcription factor.</title>
        <authorList>
            <person name="Bauer R."/>
            <person name="Imhof A."/>
            <person name="Pscherer A."/>
            <person name="Kopp H."/>
            <person name="Moser M."/>
            <person name="Seegers S."/>
            <person name="Kerscher M."/>
            <person name="Tainsky M.A."/>
            <person name="Hofstaedter F."/>
            <person name="Buettner R."/>
        </authorList>
    </citation>
    <scope>NUCLEOTIDE SEQUENCE [GENOMIC DNA]</scope>
</reference>
<reference key="4">
    <citation type="journal article" date="2003" name="Nature">
        <title>The DNA sequence and analysis of human chromosome 6.</title>
        <authorList>
            <person name="Mungall A.J."/>
            <person name="Palmer S.A."/>
            <person name="Sims S.K."/>
            <person name="Edwards C.A."/>
            <person name="Ashurst J.L."/>
            <person name="Wilming L."/>
            <person name="Jones M.C."/>
            <person name="Horton R."/>
            <person name="Hunt S.E."/>
            <person name="Scott C.E."/>
            <person name="Gilbert J.G.R."/>
            <person name="Clamp M.E."/>
            <person name="Bethel G."/>
            <person name="Milne S."/>
            <person name="Ainscough R."/>
            <person name="Almeida J.P."/>
            <person name="Ambrose K.D."/>
            <person name="Andrews T.D."/>
            <person name="Ashwell R.I.S."/>
            <person name="Babbage A.K."/>
            <person name="Bagguley C.L."/>
            <person name="Bailey J."/>
            <person name="Banerjee R."/>
            <person name="Barker D.J."/>
            <person name="Barlow K.F."/>
            <person name="Bates K."/>
            <person name="Beare D.M."/>
            <person name="Beasley H."/>
            <person name="Beasley O."/>
            <person name="Bird C.P."/>
            <person name="Blakey S.E."/>
            <person name="Bray-Allen S."/>
            <person name="Brook J."/>
            <person name="Brown A.J."/>
            <person name="Brown J.Y."/>
            <person name="Burford D.C."/>
            <person name="Burrill W."/>
            <person name="Burton J."/>
            <person name="Carder C."/>
            <person name="Carter N.P."/>
            <person name="Chapman J.C."/>
            <person name="Clark S.Y."/>
            <person name="Clark G."/>
            <person name="Clee C.M."/>
            <person name="Clegg S."/>
            <person name="Cobley V."/>
            <person name="Collier R.E."/>
            <person name="Collins J.E."/>
            <person name="Colman L.K."/>
            <person name="Corby N.R."/>
            <person name="Coville G.J."/>
            <person name="Culley K.M."/>
            <person name="Dhami P."/>
            <person name="Davies J."/>
            <person name="Dunn M."/>
            <person name="Earthrowl M.E."/>
            <person name="Ellington A.E."/>
            <person name="Evans K.A."/>
            <person name="Faulkner L."/>
            <person name="Francis M.D."/>
            <person name="Frankish A."/>
            <person name="Frankland J."/>
            <person name="French L."/>
            <person name="Garner P."/>
            <person name="Garnett J."/>
            <person name="Ghori M.J."/>
            <person name="Gilby L.M."/>
            <person name="Gillson C.J."/>
            <person name="Glithero R.J."/>
            <person name="Grafham D.V."/>
            <person name="Grant M."/>
            <person name="Gribble S."/>
            <person name="Griffiths C."/>
            <person name="Griffiths M.N.D."/>
            <person name="Hall R."/>
            <person name="Halls K.S."/>
            <person name="Hammond S."/>
            <person name="Harley J.L."/>
            <person name="Hart E.A."/>
            <person name="Heath P.D."/>
            <person name="Heathcott R."/>
            <person name="Holmes S.J."/>
            <person name="Howden P.J."/>
            <person name="Howe K.L."/>
            <person name="Howell G.R."/>
            <person name="Huckle E."/>
            <person name="Humphray S.J."/>
            <person name="Humphries M.D."/>
            <person name="Hunt A.R."/>
            <person name="Johnson C.M."/>
            <person name="Joy A.A."/>
            <person name="Kay M."/>
            <person name="Keenan S.J."/>
            <person name="Kimberley A.M."/>
            <person name="King A."/>
            <person name="Laird G.K."/>
            <person name="Langford C."/>
            <person name="Lawlor S."/>
            <person name="Leongamornlert D.A."/>
            <person name="Leversha M."/>
            <person name="Lloyd C.R."/>
            <person name="Lloyd D.M."/>
            <person name="Loveland J.E."/>
            <person name="Lovell J."/>
            <person name="Martin S."/>
            <person name="Mashreghi-Mohammadi M."/>
            <person name="Maslen G.L."/>
            <person name="Matthews L."/>
            <person name="McCann O.T."/>
            <person name="McLaren S.J."/>
            <person name="McLay K."/>
            <person name="McMurray A."/>
            <person name="Moore M.J.F."/>
            <person name="Mullikin J.C."/>
            <person name="Niblett D."/>
            <person name="Nickerson T."/>
            <person name="Novik K.L."/>
            <person name="Oliver K."/>
            <person name="Overton-Larty E.K."/>
            <person name="Parker A."/>
            <person name="Patel R."/>
            <person name="Pearce A.V."/>
            <person name="Peck A.I."/>
            <person name="Phillimore B.J.C.T."/>
            <person name="Phillips S."/>
            <person name="Plumb R.W."/>
            <person name="Porter K.M."/>
            <person name="Ramsey Y."/>
            <person name="Ranby S.A."/>
            <person name="Rice C.M."/>
            <person name="Ross M.T."/>
            <person name="Searle S.M."/>
            <person name="Sehra H.K."/>
            <person name="Sheridan E."/>
            <person name="Skuce C.D."/>
            <person name="Smith S."/>
            <person name="Smith M."/>
            <person name="Spraggon L."/>
            <person name="Squares S.L."/>
            <person name="Steward C.A."/>
            <person name="Sycamore N."/>
            <person name="Tamlyn-Hall G."/>
            <person name="Tester J."/>
            <person name="Theaker A.J."/>
            <person name="Thomas D.W."/>
            <person name="Thorpe A."/>
            <person name="Tracey A."/>
            <person name="Tromans A."/>
            <person name="Tubby B."/>
            <person name="Wall M."/>
            <person name="Wallis J.M."/>
            <person name="West A.P."/>
            <person name="White S.S."/>
            <person name="Whitehead S.L."/>
            <person name="Whittaker H."/>
            <person name="Wild A."/>
            <person name="Willey D.J."/>
            <person name="Wilmer T.E."/>
            <person name="Wood J.M."/>
            <person name="Wray P.W."/>
            <person name="Wyatt J.C."/>
            <person name="Young L."/>
            <person name="Younger R.M."/>
            <person name="Bentley D.R."/>
            <person name="Coulson A."/>
            <person name="Durbin R.M."/>
            <person name="Hubbard T."/>
            <person name="Sulston J.E."/>
            <person name="Dunham I."/>
            <person name="Rogers J."/>
            <person name="Beck S."/>
        </authorList>
    </citation>
    <scope>NUCLEOTIDE SEQUENCE [LARGE SCALE GENOMIC DNA]</scope>
</reference>
<reference key="5">
    <citation type="submission" date="2005-07" db="EMBL/GenBank/DDBJ databases">
        <authorList>
            <person name="Mural R.J."/>
            <person name="Istrail S."/>
            <person name="Sutton G.G."/>
            <person name="Florea L."/>
            <person name="Halpern A.L."/>
            <person name="Mobarry C.M."/>
            <person name="Lippert R."/>
            <person name="Walenz B."/>
            <person name="Shatkay H."/>
            <person name="Dew I."/>
            <person name="Miller J.R."/>
            <person name="Flanigan M.J."/>
            <person name="Edwards N.J."/>
            <person name="Bolanos R."/>
            <person name="Fasulo D."/>
            <person name="Halldorsson B.V."/>
            <person name="Hannenhalli S."/>
            <person name="Turner R."/>
            <person name="Yooseph S."/>
            <person name="Lu F."/>
            <person name="Nusskern D.R."/>
            <person name="Shue B.C."/>
            <person name="Zheng X.H."/>
            <person name="Zhong F."/>
            <person name="Delcher A.L."/>
            <person name="Huson D.H."/>
            <person name="Kravitz S.A."/>
            <person name="Mouchard L."/>
            <person name="Reinert K."/>
            <person name="Remington K.A."/>
            <person name="Clark A.G."/>
            <person name="Waterman M.S."/>
            <person name="Eichler E.E."/>
            <person name="Adams M.D."/>
            <person name="Hunkapiller M.W."/>
            <person name="Myers E.W."/>
            <person name="Venter J.C."/>
        </authorList>
    </citation>
    <scope>NUCLEOTIDE SEQUENCE [LARGE SCALE GENOMIC DNA]</scope>
</reference>
<reference key="6">
    <citation type="journal article" date="2004" name="Genome Res.">
        <title>The status, quality, and expansion of the NIH full-length cDNA project: the Mammalian Gene Collection (MGC).</title>
        <authorList>
            <consortium name="The MGC Project Team"/>
        </authorList>
    </citation>
    <scope>NUCLEOTIDE SEQUENCE [LARGE SCALE MRNA] (ISOFORM 2)</scope>
    <source>
        <tissue>Prostate</tissue>
    </source>
</reference>
<reference key="7">
    <citation type="journal article" date="1991" name="Science">
        <title>Characterization of a dimerization motif in AP-2 and its function in heterologous DNA-binding proteins.</title>
        <authorList>
            <person name="Williams T."/>
            <person name="Tjian R."/>
        </authorList>
    </citation>
    <scope>SUBUNIT</scope>
</reference>
<reference key="8">
    <citation type="journal article" date="1991" name="Genes Dev.">
        <title>Analysis of the DNA-binding and activation properties of the human transcription factor AP-2.</title>
        <authorList>
            <person name="Williams T."/>
            <person name="Tjian R."/>
        </authorList>
    </citation>
    <scope>DNA-BINDING</scope>
</reference>
<reference key="9">
    <citation type="journal article" date="1999" name="FEBS Lett.">
        <title>Transcription factor AP-2 activity is modulated by protein kinase A-mediated phosphorylation.</title>
        <authorList>
            <person name="Garcia M.A."/>
            <person name="Campillos M."/>
            <person name="Marina A."/>
            <person name="Valdivieso F."/>
            <person name="Vazquez J."/>
        </authorList>
    </citation>
    <scope>PHOSPHORYLATION AT SER-239</scope>
    <scope>MUTAGENESIS OF SER-239</scope>
</reference>
<reference key="10">
    <citation type="journal article" date="2001" name="Nat. Genet.">
        <title>Cardiac malformations, adrenal agenesis, neural crest defects and exencephaly in mice lacking Cited2, a new Tfap2 co-activator.</title>
        <authorList>
            <person name="Bamforth S.D."/>
            <person name="Braganca J."/>
            <person name="Eloranta J.J."/>
            <person name="Murdoch J.N."/>
            <person name="Marques F.I."/>
            <person name="Kranc K.R."/>
            <person name="Farza H."/>
            <person name="Henderson D.J."/>
            <person name="Hurst H.C."/>
            <person name="Bhattacharya S."/>
        </authorList>
    </citation>
    <scope>FUNCTION</scope>
    <scope>INTERACTION WITH CITED2</scope>
</reference>
<reference key="11">
    <citation type="journal article" date="2002" name="J. Biol. Chem.">
        <title>Human CREB-binding protein/p300-interacting transactivator with ED-rich tail (CITED) 4, a new member of the CITED family, functions as a co-activator for transcription factor AP-2.</title>
        <authorList>
            <person name="Braganca J."/>
            <person name="Swingler T."/>
            <person name="Marques F.I.R."/>
            <person name="Jones T."/>
            <person name="Eloranta J.J."/>
            <person name="Hurst H.C."/>
            <person name="Shioda T."/>
            <person name="Bhattacharya S."/>
        </authorList>
    </citation>
    <scope>INTERACTION WITH CITED4</scope>
</reference>
<reference key="12">
    <citation type="journal article" date="2002" name="J. Biol. Chem.">
        <title>Transcription factor AP-2 interacts with the SUMO-conjugating enzyme UBC9 and is sumolated in vivo.</title>
        <authorList>
            <person name="Eloranta J.J."/>
            <person name="Hurst H.C."/>
        </authorList>
    </citation>
    <scope>INTERACTION WITH UBE2I</scope>
    <scope>SUMOYLATION AT LYS-10</scope>
</reference>
<reference key="13">
    <citation type="journal article" date="2003" name="J. Biol. Chem.">
        <title>Physical and functional interactions among AP-2 transcription factors, p300/CREB-binding protein, and CITED2.</title>
        <authorList>
            <person name="Braganca J."/>
            <person name="Eloranta J.J."/>
            <person name="Bamforth S.D."/>
            <person name="Ibbitt J.C."/>
            <person name="Hurst H.C."/>
            <person name="Bhattacharya S."/>
        </authorList>
    </citation>
    <scope>FUNCTION</scope>
    <scope>SUBCELLULAR LOCATION</scope>
    <scope>DNA-BINDING</scope>
    <scope>INTERACTION WITH CITED2 AND EP300</scope>
</reference>
<reference key="14">
    <citation type="journal article" date="2003" name="J. Biol. Chem.">
        <title>RLIP, an effector of the Ral GTPases, is a platform for Cdk1 to phosphorylate epsin during the switch off of endocytosis in mitosis.</title>
        <authorList>
            <person name="Rosse C."/>
            <person name="L'Hoste S."/>
            <person name="Offner N."/>
            <person name="Picard A."/>
            <person name="Camonis J."/>
        </authorList>
    </citation>
    <scope>INTERACTION WITH RALBP1</scope>
</reference>
<reference key="15">
    <citation type="journal article" date="2004" name="Cancer Res.">
        <title>Physical and functional interactions between the Wwox tumor suppressor protein and the AP-2gamma transcription factor.</title>
        <authorList>
            <person name="Aqeilan R.I."/>
            <person name="Palamarchuk A."/>
            <person name="Weigel R.J."/>
            <person name="Herrero J.J."/>
            <person name="Pekarsky Y."/>
            <person name="Croce C.M."/>
        </authorList>
    </citation>
    <scope>INTERACTION WITH WWOX</scope>
    <scope>DOMAIN</scope>
</reference>
<reference key="16">
    <citation type="journal article" date="2008" name="Proc. Natl. Acad. Sci. U.S.A.">
        <title>A quantitative atlas of mitotic phosphorylation.</title>
        <authorList>
            <person name="Dephoure N."/>
            <person name="Zhou C."/>
            <person name="Villen J."/>
            <person name="Beausoleil S.A."/>
            <person name="Bakalarski C.E."/>
            <person name="Elledge S.J."/>
            <person name="Gygi S.P."/>
        </authorList>
    </citation>
    <scope>IDENTIFICATION BY MASS SPECTROMETRY [LARGE SCALE ANALYSIS]</scope>
    <source>
        <tissue>Cervix carcinoma</tissue>
    </source>
</reference>
<reference key="17">
    <citation type="journal article" date="2009" name="J. Cell. Biochem.">
        <title>The interaction of KCTD1 with transcription factor AP-2alpha inhibits its transactivation.</title>
        <authorList>
            <person name="Ding X."/>
            <person name="Luo C."/>
            <person name="Zhou J."/>
            <person name="Zhong Y."/>
            <person name="Hu X."/>
            <person name="Zhou F."/>
            <person name="Ren K."/>
            <person name="Gan L."/>
            <person name="He A."/>
            <person name="Zhu J."/>
            <person name="Gao X."/>
            <person name="Zhang J."/>
        </authorList>
    </citation>
    <scope>INTERACTION WITH KCTD1</scope>
</reference>
<reference key="18">
    <citation type="journal article" date="2013" name="J. Proteome Res.">
        <title>Toward a comprehensive characterization of a human cancer cell phosphoproteome.</title>
        <authorList>
            <person name="Zhou H."/>
            <person name="Di Palma S."/>
            <person name="Preisinger C."/>
            <person name="Peng M."/>
            <person name="Polat A.N."/>
            <person name="Heck A.J."/>
            <person name="Mohammed S."/>
        </authorList>
    </citation>
    <scope>IDENTIFICATION BY MASS SPECTROMETRY [LARGE SCALE ANALYSIS]</scope>
    <source>
        <tissue>Cervix carcinoma</tissue>
    </source>
</reference>
<reference key="19">
    <citation type="journal article" date="2013" name="Proc. Natl. Acad. Sci. U.S.A.">
        <title>Inhibition of neural crest formation by Kctd15 involves regulation of transcription factor AP-2.</title>
        <authorList>
            <person name="Zarelli V.E."/>
            <person name="Dawid I.B."/>
        </authorList>
    </citation>
    <scope>INTERACTION WITH KCTD15</scope>
</reference>
<reference key="20">
    <citation type="journal article" date="2017" name="Nat. Struct. Mol. Biol.">
        <title>Site-specific mapping of the human SUMO proteome reveals co-modification with phosphorylation.</title>
        <authorList>
            <person name="Hendriks I.A."/>
            <person name="Lyon D."/>
            <person name="Young C."/>
            <person name="Jensen L.J."/>
            <person name="Vertegaal A.C."/>
            <person name="Nielsen M.L."/>
        </authorList>
    </citation>
    <scope>SUMOYLATION [LARGE SCALE ANALYSIS] AT LYS-10; LYS-177 AND LYS-184</scope>
    <scope>IDENTIFICATION BY MASS SPECTROMETRY [LARGE SCALE ANALYSIS]</scope>
</reference>
<reference key="21">
    <citation type="journal article" date="2008" name="Am. J. Hum. Genet.">
        <title>TFAP2A mutations result in branchio-oculo-facial syndrome.</title>
        <authorList>
            <person name="Milunsky J.M."/>
            <person name="Maher T.A."/>
            <person name="Zhao G."/>
            <person name="Roberts A.E."/>
            <person name="Stalker H.J."/>
            <person name="Zori R.T."/>
            <person name="Burch M.N."/>
            <person name="Clemens M."/>
            <person name="Mulliken J.B."/>
            <person name="Smith R."/>
            <person name="Lin A.E."/>
        </authorList>
    </citation>
    <scope>VARIANTS BOFS PRO-249; GLY-254; GLY-255 AND GLU-262</scope>
</reference>
<evidence type="ECO:0000250" key="1"/>
<evidence type="ECO:0000256" key="2">
    <source>
        <dbReference type="SAM" id="MobiDB-lite"/>
    </source>
</evidence>
<evidence type="ECO:0000269" key="3">
    <source>
    </source>
</evidence>
<evidence type="ECO:0000269" key="4">
    <source>
    </source>
</evidence>
<evidence type="ECO:0000269" key="5">
    <source>
    </source>
</evidence>
<evidence type="ECO:0000269" key="6">
    <source>
    </source>
</evidence>
<evidence type="ECO:0000269" key="7">
    <source>
    </source>
</evidence>
<evidence type="ECO:0000269" key="8">
    <source>
    </source>
</evidence>
<evidence type="ECO:0000269" key="9">
    <source>
    </source>
</evidence>
<evidence type="ECO:0000269" key="10">
    <source>
    </source>
</evidence>
<evidence type="ECO:0000269" key="11">
    <source>
    </source>
</evidence>
<evidence type="ECO:0000269" key="12">
    <source>
    </source>
</evidence>
<evidence type="ECO:0000269" key="13">
    <source>
    </source>
</evidence>
<evidence type="ECO:0000303" key="14">
    <source>
    </source>
</evidence>
<evidence type="ECO:0000303" key="15">
    <source>
    </source>
</evidence>
<evidence type="ECO:0000305" key="16"/>
<evidence type="ECO:0000305" key="17">
    <source>
    </source>
</evidence>
<evidence type="ECO:0007744" key="18">
    <source>
    </source>
</evidence>
<evidence type="ECO:0007829" key="19">
    <source>
        <dbReference type="PDB" id="8J0K"/>
    </source>
</evidence>
<evidence type="ECO:0007829" key="20">
    <source>
        <dbReference type="PDB" id="8J0L"/>
    </source>
</evidence>
<dbReference type="EMBL" id="M36711">
    <property type="protein sequence ID" value="AAA35539.1"/>
    <property type="molecule type" value="mRNA"/>
</dbReference>
<dbReference type="EMBL" id="M61156">
    <property type="protein sequence ID" value="AAA02487.1"/>
    <property type="molecule type" value="mRNA"/>
</dbReference>
<dbReference type="EMBL" id="X52611">
    <property type="protein sequence ID" value="CAA36842.1"/>
    <property type="molecule type" value="mRNA"/>
</dbReference>
<dbReference type="EMBL" id="X77343">
    <property type="protein sequence ID" value="CAB59735.1"/>
    <property type="molecule type" value="Genomic_DNA"/>
</dbReference>
<dbReference type="EMBL" id="AL138885">
    <property type="status" value="NOT_ANNOTATED_CDS"/>
    <property type="molecule type" value="Genomic_DNA"/>
</dbReference>
<dbReference type="EMBL" id="CH471087">
    <property type="protein sequence ID" value="EAW55249.1"/>
    <property type="molecule type" value="Genomic_DNA"/>
</dbReference>
<dbReference type="EMBL" id="BC017754">
    <property type="protein sequence ID" value="AAH17754.1"/>
    <property type="molecule type" value="mRNA"/>
</dbReference>
<dbReference type="CCDS" id="CCDS34337.1">
    <molecule id="P05549-5"/>
</dbReference>
<dbReference type="CCDS" id="CCDS43422.1">
    <molecule id="P05549-6"/>
</dbReference>
<dbReference type="PIR" id="A31752">
    <property type="entry name" value="A31752"/>
</dbReference>
<dbReference type="RefSeq" id="NP_001027451.1">
    <molecule id="P05549-5"/>
    <property type="nucleotide sequence ID" value="NM_001032280.3"/>
</dbReference>
<dbReference type="RefSeq" id="NP_001035890.1">
    <molecule id="P05549-6"/>
    <property type="nucleotide sequence ID" value="NM_001042425.3"/>
</dbReference>
<dbReference type="RefSeq" id="NP_003211.1">
    <property type="nucleotide sequence ID" value="NM_003220.2"/>
</dbReference>
<dbReference type="PDB" id="8J0K">
    <property type="method" value="X-ray"/>
    <property type="resolution" value="2.10 A"/>
    <property type="chains" value="A/B=202-420"/>
</dbReference>
<dbReference type="PDB" id="8J0L">
    <property type="method" value="X-ray"/>
    <property type="resolution" value="1.98 A"/>
    <property type="chains" value="A/B=202-420"/>
</dbReference>
<dbReference type="PDB" id="8J0R">
    <property type="method" value="X-ray"/>
    <property type="resolution" value="2.10 A"/>
    <property type="chains" value="A/B=202-420"/>
</dbReference>
<dbReference type="PDBsum" id="8J0K"/>
<dbReference type="PDBsum" id="8J0L"/>
<dbReference type="PDBsum" id="8J0R"/>
<dbReference type="SMR" id="P05549"/>
<dbReference type="BioGRID" id="112878">
    <property type="interactions" value="114"/>
</dbReference>
<dbReference type="CORUM" id="P05549"/>
<dbReference type="FunCoup" id="P05549">
    <property type="interactions" value="2047"/>
</dbReference>
<dbReference type="IntAct" id="P05549">
    <property type="interactions" value="113"/>
</dbReference>
<dbReference type="MINT" id="P05549"/>
<dbReference type="STRING" id="9606.ENSP00000501092"/>
<dbReference type="GlyGen" id="P05549">
    <property type="glycosylation" value="1 site, 1 O-linked glycan (1 site)"/>
</dbReference>
<dbReference type="iPTMnet" id="P05549"/>
<dbReference type="PhosphoSitePlus" id="P05549"/>
<dbReference type="BioMuta" id="TFAP2A"/>
<dbReference type="DMDM" id="135302"/>
<dbReference type="jPOST" id="P05549"/>
<dbReference type="MassIVE" id="P05549"/>
<dbReference type="PaxDb" id="9606-ENSP00000368924"/>
<dbReference type="PeptideAtlas" id="P05549"/>
<dbReference type="ProteomicsDB" id="51847">
    <molecule id="P05549-1"/>
</dbReference>
<dbReference type="ProteomicsDB" id="51848">
    <molecule id="P05549-2"/>
</dbReference>
<dbReference type="ProteomicsDB" id="51849">
    <molecule id="P05549-5"/>
</dbReference>
<dbReference type="ProteomicsDB" id="64874"/>
<dbReference type="Pumba" id="P05549"/>
<dbReference type="Antibodypedia" id="3770">
    <property type="antibodies" value="552 antibodies from 37 providers"/>
</dbReference>
<dbReference type="DNASU" id="7020"/>
<dbReference type="Ensembl" id="ENST00000319516.8">
    <molecule id="P05549-6"/>
    <property type="protein sequence ID" value="ENSP00000316516.4"/>
    <property type="gene ID" value="ENSG00000137203.15"/>
</dbReference>
<dbReference type="Ensembl" id="ENST00000379608.9">
    <molecule id="P05549-5"/>
    <property type="protein sequence ID" value="ENSP00000368928.3"/>
    <property type="gene ID" value="ENSG00000137203.15"/>
</dbReference>
<dbReference type="GeneID" id="7020"/>
<dbReference type="KEGG" id="hsa:7020"/>
<dbReference type="UCSC" id="uc003myq.4">
    <molecule id="P05549-1"/>
    <property type="organism name" value="human"/>
</dbReference>
<dbReference type="AGR" id="HGNC:11742"/>
<dbReference type="CTD" id="7020"/>
<dbReference type="DisGeNET" id="7020"/>
<dbReference type="GeneCards" id="TFAP2A"/>
<dbReference type="GeneReviews" id="TFAP2A"/>
<dbReference type="HGNC" id="HGNC:11742">
    <property type="gene designation" value="TFAP2A"/>
</dbReference>
<dbReference type="HPA" id="ENSG00000137203">
    <property type="expression patterns" value="Tissue enhanced (breast, skin)"/>
</dbReference>
<dbReference type="MalaCards" id="TFAP2A"/>
<dbReference type="MIM" id="107580">
    <property type="type" value="gene"/>
</dbReference>
<dbReference type="MIM" id="113620">
    <property type="type" value="phenotype"/>
</dbReference>
<dbReference type="neXtProt" id="NX_P05549"/>
<dbReference type="OpenTargets" id="ENSG00000137203"/>
<dbReference type="Orphanet" id="1297">
    <property type="disease" value="Branchio-oculo-facial syndrome"/>
</dbReference>
<dbReference type="PharmGKB" id="PA36459"/>
<dbReference type="VEuPathDB" id="HostDB:ENSG00000137203"/>
<dbReference type="eggNOG" id="KOG3811">
    <property type="taxonomic scope" value="Eukaryota"/>
</dbReference>
<dbReference type="GeneTree" id="ENSGT00950000182848"/>
<dbReference type="HOGENOM" id="CLU_035175_4_1_1"/>
<dbReference type="InParanoid" id="P05549"/>
<dbReference type="OrthoDB" id="6252992at2759"/>
<dbReference type="PAN-GO" id="P05549">
    <property type="GO annotations" value="6 GO annotations based on evolutionary models"/>
</dbReference>
<dbReference type="PhylomeDB" id="P05549"/>
<dbReference type="TreeFam" id="TF313718"/>
<dbReference type="PathwayCommons" id="P05549"/>
<dbReference type="Reactome" id="R-HSA-3232118">
    <molecule id="P05549-1"/>
    <property type="pathway name" value="SUMOylation of transcription factors"/>
</dbReference>
<dbReference type="Reactome" id="R-HSA-8864260">
    <property type="pathway name" value="Transcriptional regulation by the AP-2 (TFAP2) family of transcription factors"/>
</dbReference>
<dbReference type="Reactome" id="R-HSA-8866904">
    <property type="pathway name" value="Negative regulation of activity of TFAP2 (AP-2) family transcription factors"/>
</dbReference>
<dbReference type="Reactome" id="R-HSA-8866906">
    <property type="pathway name" value="TFAP2 (AP-2) family regulates transcription of other transcription factors"/>
</dbReference>
<dbReference type="Reactome" id="R-HSA-8866907">
    <property type="pathway name" value="Activation of the TFAP2 (AP-2) family of transcription factors"/>
</dbReference>
<dbReference type="Reactome" id="R-HSA-8866910">
    <property type="pathway name" value="TFAP2 (AP-2) family regulates transcription of growth factors and their receptors"/>
</dbReference>
<dbReference type="Reactome" id="R-HSA-8866911">
    <property type="pathway name" value="TFAP2 (AP-2) family regulates transcription of cell cycle factors"/>
</dbReference>
<dbReference type="Reactome" id="R-HSA-8869496">
    <property type="pathway name" value="TFAP2A acts as a transcriptional repressor during retinoic acid induced cell differentiation"/>
</dbReference>
<dbReference type="Reactome" id="R-HSA-9824585">
    <property type="pathway name" value="Regulation of MITF-M-dependent genes involved in pigmentation"/>
</dbReference>
<dbReference type="Reactome" id="R-HSA-9834899">
    <property type="pathway name" value="Specification of the neural plate border"/>
</dbReference>
<dbReference type="SignaLink" id="P05549"/>
<dbReference type="SIGNOR" id="P05549"/>
<dbReference type="BioGRID-ORCS" id="7020">
    <property type="hits" value="46 hits in 1176 CRISPR screens"/>
</dbReference>
<dbReference type="ChiTaRS" id="TFAP2A">
    <property type="organism name" value="human"/>
</dbReference>
<dbReference type="GeneWiki" id="TFAP2A"/>
<dbReference type="GenomeRNAi" id="7020"/>
<dbReference type="Pharos" id="P05549">
    <property type="development level" value="Tbio"/>
</dbReference>
<dbReference type="PRO" id="PR:P05549"/>
<dbReference type="Proteomes" id="UP000005640">
    <property type="component" value="Chromosome 6"/>
</dbReference>
<dbReference type="RNAct" id="P05549">
    <property type="molecule type" value="protein"/>
</dbReference>
<dbReference type="Bgee" id="ENSG00000137203">
    <property type="expression patterns" value="Expressed in upper leg skin and 158 other cell types or tissues"/>
</dbReference>
<dbReference type="ExpressionAtlas" id="P05549">
    <property type="expression patterns" value="baseline and differential"/>
</dbReference>
<dbReference type="GO" id="GO:0000785">
    <property type="term" value="C:chromatin"/>
    <property type="evidence" value="ECO:0000247"/>
    <property type="project" value="NTNU_SB"/>
</dbReference>
<dbReference type="GO" id="GO:0005654">
    <property type="term" value="C:nucleoplasm"/>
    <property type="evidence" value="ECO:0000314"/>
    <property type="project" value="HPA"/>
</dbReference>
<dbReference type="GO" id="GO:0005634">
    <property type="term" value="C:nucleus"/>
    <property type="evidence" value="ECO:0000314"/>
    <property type="project" value="UniProtKB"/>
</dbReference>
<dbReference type="GO" id="GO:0003682">
    <property type="term" value="F:chromatin binding"/>
    <property type="evidence" value="ECO:0000250"/>
    <property type="project" value="UniProtKB"/>
</dbReference>
<dbReference type="GO" id="GO:0003677">
    <property type="term" value="F:DNA binding"/>
    <property type="evidence" value="ECO:0000314"/>
    <property type="project" value="UniProtKB"/>
</dbReference>
<dbReference type="GO" id="GO:0001228">
    <property type="term" value="F:DNA-binding transcription activator activity, RNA polymerase II-specific"/>
    <property type="evidence" value="ECO:0000314"/>
    <property type="project" value="UniProtKB"/>
</dbReference>
<dbReference type="GO" id="GO:0000981">
    <property type="term" value="F:DNA-binding transcription factor activity, RNA polymerase II-specific"/>
    <property type="evidence" value="ECO:0000314"/>
    <property type="project" value="UniProtKB"/>
</dbReference>
<dbReference type="GO" id="GO:0001227">
    <property type="term" value="F:DNA-binding transcription repressor activity, RNA polymerase II-specific"/>
    <property type="evidence" value="ECO:0000314"/>
    <property type="project" value="UniProtKB"/>
</dbReference>
<dbReference type="GO" id="GO:0042802">
    <property type="term" value="F:identical protein binding"/>
    <property type="evidence" value="ECO:0000353"/>
    <property type="project" value="UniProtKB"/>
</dbReference>
<dbReference type="GO" id="GO:0000978">
    <property type="term" value="F:RNA polymerase II cis-regulatory region sequence-specific DNA binding"/>
    <property type="evidence" value="ECO:0000314"/>
    <property type="project" value="UniProtKB"/>
</dbReference>
<dbReference type="GO" id="GO:0000977">
    <property type="term" value="F:RNA polymerase II transcription regulatory region sequence-specific DNA binding"/>
    <property type="evidence" value="ECO:0000318"/>
    <property type="project" value="GO_Central"/>
</dbReference>
<dbReference type="GO" id="GO:0043565">
    <property type="term" value="F:sequence-specific DNA binding"/>
    <property type="evidence" value="ECO:0000314"/>
    <property type="project" value="UniProtKB"/>
</dbReference>
<dbReference type="GO" id="GO:1990837">
    <property type="term" value="F:sequence-specific double-stranded DNA binding"/>
    <property type="evidence" value="ECO:0000314"/>
    <property type="project" value="ARUK-UCL"/>
</dbReference>
<dbReference type="GO" id="GO:0000976">
    <property type="term" value="F:transcription cis-regulatory region binding"/>
    <property type="evidence" value="ECO:0000314"/>
    <property type="project" value="UniProtKB"/>
</dbReference>
<dbReference type="GO" id="GO:0060349">
    <property type="term" value="P:bone morphogenesis"/>
    <property type="evidence" value="ECO:0000250"/>
    <property type="project" value="UniProtKB"/>
</dbReference>
<dbReference type="GO" id="GO:0071281">
    <property type="term" value="P:cellular response to iron ion"/>
    <property type="evidence" value="ECO:0000314"/>
    <property type="project" value="UniProtKB"/>
</dbReference>
<dbReference type="GO" id="GO:0048701">
    <property type="term" value="P:embryonic cranial skeleton morphogenesis"/>
    <property type="evidence" value="ECO:0000250"/>
    <property type="project" value="UniProtKB"/>
</dbReference>
<dbReference type="GO" id="GO:0035115">
    <property type="term" value="P:embryonic forelimb morphogenesis"/>
    <property type="evidence" value="ECO:0000250"/>
    <property type="project" value="UniProtKB"/>
</dbReference>
<dbReference type="GO" id="GO:0061029">
    <property type="term" value="P:eyelid development in camera-type eye"/>
    <property type="evidence" value="ECO:0000250"/>
    <property type="project" value="UniProtKB"/>
</dbReference>
<dbReference type="GO" id="GO:0042472">
    <property type="term" value="P:inner ear morphogenesis"/>
    <property type="evidence" value="ECO:0000315"/>
    <property type="project" value="UniProtKB"/>
</dbReference>
<dbReference type="GO" id="GO:0001822">
    <property type="term" value="P:kidney development"/>
    <property type="evidence" value="ECO:0000315"/>
    <property type="project" value="UniProtKB"/>
</dbReference>
<dbReference type="GO" id="GO:0043066">
    <property type="term" value="P:negative regulation of apoptotic process"/>
    <property type="evidence" value="ECO:0000314"/>
    <property type="project" value="UniProtKB"/>
</dbReference>
<dbReference type="GO" id="GO:0008285">
    <property type="term" value="P:negative regulation of cell population proliferation"/>
    <property type="evidence" value="ECO:0000314"/>
    <property type="project" value="UniProtKB"/>
</dbReference>
<dbReference type="GO" id="GO:0045892">
    <property type="term" value="P:negative regulation of DNA-templated transcription"/>
    <property type="evidence" value="ECO:0000314"/>
    <property type="project" value="UniProtKB"/>
</dbReference>
<dbReference type="GO" id="GO:2000378">
    <property type="term" value="P:negative regulation of reactive oxygen species metabolic process"/>
    <property type="evidence" value="ECO:0000314"/>
    <property type="project" value="UniProtKB"/>
</dbReference>
<dbReference type="GO" id="GO:0010944">
    <property type="term" value="P:negative regulation of transcription by competitive promoter binding"/>
    <property type="evidence" value="ECO:0000314"/>
    <property type="project" value="UniProtKB"/>
</dbReference>
<dbReference type="GO" id="GO:0000122">
    <property type="term" value="P:negative regulation of transcription by RNA polymerase II"/>
    <property type="evidence" value="ECO:0000314"/>
    <property type="project" value="UniProtKB"/>
</dbReference>
<dbReference type="GO" id="GO:0007399">
    <property type="term" value="P:nervous system development"/>
    <property type="evidence" value="ECO:0000318"/>
    <property type="project" value="GO_Central"/>
</dbReference>
<dbReference type="GO" id="GO:0021623">
    <property type="term" value="P:oculomotor nerve formation"/>
    <property type="evidence" value="ECO:0000250"/>
    <property type="project" value="UniProtKB"/>
</dbReference>
<dbReference type="GO" id="GO:0003409">
    <property type="term" value="P:optic cup structural organization"/>
    <property type="evidence" value="ECO:0000250"/>
    <property type="project" value="UniProtKB"/>
</dbReference>
<dbReference type="GO" id="GO:0003404">
    <property type="term" value="P:optic vesicle morphogenesis"/>
    <property type="evidence" value="ECO:0000250"/>
    <property type="project" value="UniProtKB"/>
</dbReference>
<dbReference type="GO" id="GO:0030501">
    <property type="term" value="P:positive regulation of bone mineralization"/>
    <property type="evidence" value="ECO:0000314"/>
    <property type="project" value="UniProtKB"/>
</dbReference>
<dbReference type="GO" id="GO:0045893">
    <property type="term" value="P:positive regulation of DNA-templated transcription"/>
    <property type="evidence" value="ECO:0000314"/>
    <property type="project" value="UniProtKB"/>
</dbReference>
<dbReference type="GO" id="GO:0010628">
    <property type="term" value="P:positive regulation of gene expression"/>
    <property type="evidence" value="ECO:0000250"/>
    <property type="project" value="UniProtKB"/>
</dbReference>
<dbReference type="GO" id="GO:0043525">
    <property type="term" value="P:positive regulation of neuron apoptotic process"/>
    <property type="evidence" value="ECO:0000314"/>
    <property type="project" value="UniProtKB"/>
</dbReference>
<dbReference type="GO" id="GO:0070172">
    <property type="term" value="P:positive regulation of tooth mineralization"/>
    <property type="evidence" value="ECO:0000314"/>
    <property type="project" value="UniProtKB"/>
</dbReference>
<dbReference type="GO" id="GO:0045944">
    <property type="term" value="P:positive regulation of transcription by RNA polymerase II"/>
    <property type="evidence" value="ECO:0000314"/>
    <property type="project" value="UniProtKB"/>
</dbReference>
<dbReference type="GO" id="GO:0045595">
    <property type="term" value="P:regulation of cell differentiation"/>
    <property type="evidence" value="ECO:0000314"/>
    <property type="project" value="UniProtKB"/>
</dbReference>
<dbReference type="GO" id="GO:0042127">
    <property type="term" value="P:regulation of cell population proliferation"/>
    <property type="evidence" value="ECO:0000318"/>
    <property type="project" value="GO_Central"/>
</dbReference>
<dbReference type="GO" id="GO:0010842">
    <property type="term" value="P:retina layer formation"/>
    <property type="evidence" value="ECO:0000270"/>
    <property type="project" value="UniProtKB"/>
</dbReference>
<dbReference type="GO" id="GO:0060021">
    <property type="term" value="P:roof of mouth development"/>
    <property type="evidence" value="ECO:0000315"/>
    <property type="project" value="UniProtKB"/>
</dbReference>
<dbReference type="GO" id="GO:0007605">
    <property type="term" value="P:sensory perception of sound"/>
    <property type="evidence" value="ECO:0000315"/>
    <property type="project" value="UniProtKB"/>
</dbReference>
<dbReference type="GO" id="GO:0001501">
    <property type="term" value="P:skeletal system development"/>
    <property type="evidence" value="ECO:0000318"/>
    <property type="project" value="GO_Central"/>
</dbReference>
<dbReference type="GO" id="GO:0021559">
    <property type="term" value="P:trigeminal nerve development"/>
    <property type="evidence" value="ECO:0000250"/>
    <property type="project" value="UniProtKB"/>
</dbReference>
<dbReference type="InterPro" id="IPR004979">
    <property type="entry name" value="TF_AP2"/>
</dbReference>
<dbReference type="InterPro" id="IPR008121">
    <property type="entry name" value="TF_AP2_alpha_N"/>
</dbReference>
<dbReference type="InterPro" id="IPR013854">
    <property type="entry name" value="TF_AP2_C"/>
</dbReference>
<dbReference type="PANTHER" id="PTHR10812">
    <property type="entry name" value="TRANSCRIPTION FACTOR AP-2"/>
    <property type="match status" value="1"/>
</dbReference>
<dbReference type="PANTHER" id="PTHR10812:SF8">
    <property type="entry name" value="TRANSCRIPTION FACTOR AP-2-ALPHA"/>
    <property type="match status" value="1"/>
</dbReference>
<dbReference type="Pfam" id="PF03299">
    <property type="entry name" value="TF_AP-2"/>
    <property type="match status" value="1"/>
</dbReference>
<dbReference type="PRINTS" id="PR01749">
    <property type="entry name" value="AP2ATNSCPFCT"/>
</dbReference>
<dbReference type="PRINTS" id="PR01748">
    <property type="entry name" value="AP2TNSCPFCT"/>
</dbReference>
<protein>
    <recommendedName>
        <fullName>Transcription factor AP-2-alpha</fullName>
        <shortName>AP2-alpha</shortName>
    </recommendedName>
    <alternativeName>
        <fullName>AP-2 transcription factor</fullName>
    </alternativeName>
    <alternativeName>
        <fullName>Activating enhancer-binding protein 2-alpha</fullName>
    </alternativeName>
    <alternativeName>
        <fullName>Activator protein 2</fullName>
        <shortName>AP-2</shortName>
    </alternativeName>
</protein>